<accession>P54241</accession>
<comment type="catalytic activity">
    <reaction>
        <text>alpha-D-glucose 6-phosphate = beta-D-fructose 6-phosphate</text>
        <dbReference type="Rhea" id="RHEA:11816"/>
        <dbReference type="ChEBI" id="CHEBI:57634"/>
        <dbReference type="ChEBI" id="CHEBI:58225"/>
        <dbReference type="EC" id="5.3.1.9"/>
    </reaction>
</comment>
<comment type="pathway">
    <text>Carbohydrate degradation; glycolysis; D-glyceraldehyde 3-phosphate and glycerone phosphate from D-glucose: step 2/4.</text>
</comment>
<comment type="subunit">
    <text evidence="1">Homodimer.</text>
</comment>
<comment type="subcellular location">
    <subcellularLocation>
        <location evidence="1">Cytoplasm</location>
    </subcellularLocation>
</comment>
<comment type="similarity">
    <text evidence="2">Belongs to the GPI family.</text>
</comment>
<reference key="1">
    <citation type="journal article" date="1996" name="Syst. Bot.">
        <title>Phylogenetic relationships among the sections of Clarkia (Onagraceae) inferred from the nucleotide sequences of PgiC.</title>
        <authorList>
            <person name="Gottlieb L.D."/>
            <person name="Ford V.S."/>
        </authorList>
        <dbReference type="AGRICOLA" id="IND20535960"/>
    </citation>
    <scope>NUCLEOTIDE SEQUENCE [GENOMIC DNA]</scope>
    <source>
        <strain>Population LDG 8701</strain>
    </source>
</reference>
<name>G6PI2_CLACO</name>
<proteinExistence type="inferred from homology"/>
<feature type="chain" id="PRO_0000180560" description="Glucose-6-phosphate isomerase, cytosolic 2">
    <location>
        <begin position="1"/>
        <end position="569"/>
    </location>
</feature>
<feature type="active site" description="Proton donor" evidence="1">
    <location>
        <position position="360"/>
    </location>
</feature>
<feature type="active site" evidence="1">
    <location>
        <position position="391"/>
    </location>
</feature>
<feature type="active site" evidence="1">
    <location>
        <position position="516"/>
    </location>
</feature>
<keyword id="KW-0963">Cytoplasm</keyword>
<keyword id="KW-0312">Gluconeogenesis</keyword>
<keyword id="KW-0324">Glycolysis</keyword>
<keyword id="KW-0413">Isomerase</keyword>
<organism>
    <name type="scientific">Clarkia concinna</name>
    <name type="common">Red ribbons</name>
    <name type="synonym">Eucharidium concinnum</name>
    <dbReference type="NCBI Taxonomy" id="49040"/>
    <lineage>
        <taxon>Eukaryota</taxon>
        <taxon>Viridiplantae</taxon>
        <taxon>Streptophyta</taxon>
        <taxon>Embryophyta</taxon>
        <taxon>Tracheophyta</taxon>
        <taxon>Spermatophyta</taxon>
        <taxon>Magnoliopsida</taxon>
        <taxon>eudicotyledons</taxon>
        <taxon>Gunneridae</taxon>
        <taxon>Pentapetalae</taxon>
        <taxon>rosids</taxon>
        <taxon>malvids</taxon>
        <taxon>Myrtales</taxon>
        <taxon>Onagraceae</taxon>
        <taxon>Onagroideae</taxon>
        <taxon>Onagreae</taxon>
        <taxon>Clarkia</taxon>
    </lineage>
</organism>
<evidence type="ECO:0000250" key="1"/>
<evidence type="ECO:0000305" key="2"/>
<dbReference type="EC" id="5.3.1.9"/>
<dbReference type="EMBL" id="X89391">
    <property type="protein sequence ID" value="CAA61571.1"/>
    <property type="molecule type" value="Genomic_DNA"/>
</dbReference>
<dbReference type="SMR" id="P54241"/>
<dbReference type="UniPathway" id="UPA00109">
    <property type="reaction ID" value="UER00181"/>
</dbReference>
<dbReference type="GO" id="GO:0005829">
    <property type="term" value="C:cytosol"/>
    <property type="evidence" value="ECO:0007669"/>
    <property type="project" value="TreeGrafter"/>
</dbReference>
<dbReference type="GO" id="GO:0097367">
    <property type="term" value="F:carbohydrate derivative binding"/>
    <property type="evidence" value="ECO:0007669"/>
    <property type="project" value="InterPro"/>
</dbReference>
<dbReference type="GO" id="GO:0004347">
    <property type="term" value="F:glucose-6-phosphate isomerase activity"/>
    <property type="evidence" value="ECO:0007669"/>
    <property type="project" value="UniProtKB-EC"/>
</dbReference>
<dbReference type="GO" id="GO:0048029">
    <property type="term" value="F:monosaccharide binding"/>
    <property type="evidence" value="ECO:0007669"/>
    <property type="project" value="TreeGrafter"/>
</dbReference>
<dbReference type="GO" id="GO:0006094">
    <property type="term" value="P:gluconeogenesis"/>
    <property type="evidence" value="ECO:0007669"/>
    <property type="project" value="UniProtKB-KW"/>
</dbReference>
<dbReference type="GO" id="GO:0051156">
    <property type="term" value="P:glucose 6-phosphate metabolic process"/>
    <property type="evidence" value="ECO:0007669"/>
    <property type="project" value="TreeGrafter"/>
</dbReference>
<dbReference type="GO" id="GO:0006096">
    <property type="term" value="P:glycolytic process"/>
    <property type="evidence" value="ECO:0007669"/>
    <property type="project" value="UniProtKB-UniPathway"/>
</dbReference>
<dbReference type="CDD" id="cd05015">
    <property type="entry name" value="SIS_PGI_1"/>
    <property type="match status" value="1"/>
</dbReference>
<dbReference type="CDD" id="cd05016">
    <property type="entry name" value="SIS_PGI_2"/>
    <property type="match status" value="1"/>
</dbReference>
<dbReference type="FunFam" id="1.10.1390.10:FF:000002">
    <property type="entry name" value="Glucose-6-phosphate isomerase"/>
    <property type="match status" value="1"/>
</dbReference>
<dbReference type="FunFam" id="3.40.50.10490:FF:000018">
    <property type="entry name" value="Glucose-6-phosphate isomerase"/>
    <property type="match status" value="1"/>
</dbReference>
<dbReference type="FunFam" id="3.40.50.10490:FF:000031">
    <property type="entry name" value="Glucose-6-phosphate isomerase"/>
    <property type="match status" value="1"/>
</dbReference>
<dbReference type="FunFam" id="3.40.50.10490:FF:000048">
    <property type="entry name" value="Glucose-6-phosphate isomerase"/>
    <property type="match status" value="1"/>
</dbReference>
<dbReference type="Gene3D" id="1.10.1390.10">
    <property type="match status" value="1"/>
</dbReference>
<dbReference type="Gene3D" id="3.40.50.10490">
    <property type="entry name" value="Glucose-6-phosphate isomerase like protein, domain 1"/>
    <property type="match status" value="2"/>
</dbReference>
<dbReference type="HAMAP" id="MF_00473">
    <property type="entry name" value="G6P_isomerase"/>
    <property type="match status" value="1"/>
</dbReference>
<dbReference type="InterPro" id="IPR001672">
    <property type="entry name" value="G6P_Isomerase"/>
</dbReference>
<dbReference type="InterPro" id="IPR023096">
    <property type="entry name" value="G6P_Isomerase_C"/>
</dbReference>
<dbReference type="InterPro" id="IPR018189">
    <property type="entry name" value="Phosphoglucose_isomerase_CS"/>
</dbReference>
<dbReference type="InterPro" id="IPR046348">
    <property type="entry name" value="SIS_dom_sf"/>
</dbReference>
<dbReference type="InterPro" id="IPR035476">
    <property type="entry name" value="SIS_PGI_1"/>
</dbReference>
<dbReference type="InterPro" id="IPR035482">
    <property type="entry name" value="SIS_PGI_2"/>
</dbReference>
<dbReference type="NCBIfam" id="NF001211">
    <property type="entry name" value="PRK00179.1"/>
    <property type="match status" value="1"/>
</dbReference>
<dbReference type="PANTHER" id="PTHR11469">
    <property type="entry name" value="GLUCOSE-6-PHOSPHATE ISOMERASE"/>
    <property type="match status" value="1"/>
</dbReference>
<dbReference type="PANTHER" id="PTHR11469:SF1">
    <property type="entry name" value="GLUCOSE-6-PHOSPHATE ISOMERASE"/>
    <property type="match status" value="1"/>
</dbReference>
<dbReference type="Pfam" id="PF00342">
    <property type="entry name" value="PGI"/>
    <property type="match status" value="1"/>
</dbReference>
<dbReference type="PRINTS" id="PR00662">
    <property type="entry name" value="G6PISOMERASE"/>
</dbReference>
<dbReference type="SUPFAM" id="SSF53697">
    <property type="entry name" value="SIS domain"/>
    <property type="match status" value="1"/>
</dbReference>
<dbReference type="PROSITE" id="PS00765">
    <property type="entry name" value="P_GLUCOSE_ISOMERASE_1"/>
    <property type="match status" value="1"/>
</dbReference>
<dbReference type="PROSITE" id="PS00174">
    <property type="entry name" value="P_GLUCOSE_ISOMERASE_2"/>
    <property type="match status" value="1"/>
</dbReference>
<dbReference type="PROSITE" id="PS51463">
    <property type="entry name" value="P_GLUCOSE_ISOMERASE_3"/>
    <property type="match status" value="1"/>
</dbReference>
<protein>
    <recommendedName>
        <fullName>Glucose-6-phosphate isomerase, cytosolic 2</fullName>
        <shortName>GPI</shortName>
        <ecNumber>5.3.1.9</ecNumber>
    </recommendedName>
    <alternativeName>
        <fullName>Phosphoglucose isomerase</fullName>
        <shortName>PGI</shortName>
    </alternativeName>
    <alternativeName>
        <fullName>Phosphohexose isomerase</fullName>
        <shortName>PHI</shortName>
    </alternativeName>
</protein>
<sequence length="569" mass="62659">MATPSLISETEAWKDLKAHLEGIKRTHLRELMGDTERCQSMMVEFDNIFLDYSRQQASPDTINKLFKLADAAHLKRKIDRMYNGDHINSTENRSVLHVALRAPRNSAICSDGKNVVPDVWSVLDKIKDFSERVRNGSWVGATGKELKDVIAVGIGGSFLGPLFVHTALQTDPEASKNAIGRELRFLANVDPIDAAKNISGLNPETTLVVVVSKTFTTAETMLNARTLREWISSALGASAVAKHMVAVSTNLPLVEKFGIDPNNAFAFWDWVGGRYSVCSAVGVLPLSLQYGFAVVEKFLQGAHSIDQHFSSAPFEKNIPVLLGLLSVWNVSFLGYPARAILPYSQALEKLAPHIQQVSMESNGKGVSVDGLPLPFESGEIDFGEPGTNGQHSFYQLIHQGRVIPCDFIGVVKSQQPVYLKGEVVNNHDELMSNFFAQPDALAYGKTPEQLKKENVSEHLIPHKTFNGNRPSLSILLPTLDAYRIGQLLAVYEHRVAVQGFVWGINSFDQWGVELGKSLATQVRKQLHASRVKGEAVEEGFNFSTKTLLTRYLEASSDVPADPSTLLPKI</sequence>
<gene>
    <name type="primary">PGIC2</name>
</gene>